<reference key="1">
    <citation type="submission" date="2008-05" db="EMBL/GenBank/DDBJ databases">
        <title>Complete sequence of Shigella boydii serotype 18 strain BS512.</title>
        <authorList>
            <person name="Rasko D.A."/>
            <person name="Rosovitz M."/>
            <person name="Maurelli A.T."/>
            <person name="Myers G."/>
            <person name="Seshadri R."/>
            <person name="Cer R."/>
            <person name="Jiang L."/>
            <person name="Ravel J."/>
            <person name="Sebastian Y."/>
        </authorList>
    </citation>
    <scope>NUCLEOTIDE SEQUENCE [LARGE SCALE GENOMIC DNA]</scope>
    <source>
        <strain>CDC 3083-94 / BS512</strain>
    </source>
</reference>
<proteinExistence type="inferred from homology"/>
<dbReference type="EMBL" id="CP001063">
    <property type="protein sequence ID" value="ACD07566.1"/>
    <property type="molecule type" value="Genomic_DNA"/>
</dbReference>
<dbReference type="RefSeq" id="WP_001240105.1">
    <property type="nucleotide sequence ID" value="NC_010658.1"/>
</dbReference>
<dbReference type="SMR" id="B2TWL3"/>
<dbReference type="STRING" id="344609.SbBS512_E0911"/>
<dbReference type="GeneID" id="75205790"/>
<dbReference type="KEGG" id="sbc:SbBS512_E0911"/>
<dbReference type="HOGENOM" id="CLU_080662_1_0_6"/>
<dbReference type="Proteomes" id="UP000001030">
    <property type="component" value="Chromosome"/>
</dbReference>
<dbReference type="GO" id="GO:0005886">
    <property type="term" value="C:plasma membrane"/>
    <property type="evidence" value="ECO:0007669"/>
    <property type="project" value="UniProtKB-SubCell"/>
</dbReference>
<dbReference type="GO" id="GO:0009055">
    <property type="term" value="F:electron transfer activity"/>
    <property type="evidence" value="ECO:0007669"/>
    <property type="project" value="UniProtKB-UniRule"/>
</dbReference>
<dbReference type="GO" id="GO:0010181">
    <property type="term" value="F:FMN binding"/>
    <property type="evidence" value="ECO:0007669"/>
    <property type="project" value="UniProtKB-UniRule"/>
</dbReference>
<dbReference type="GO" id="GO:0020037">
    <property type="term" value="F:heme binding"/>
    <property type="evidence" value="ECO:0007669"/>
    <property type="project" value="UniProtKB-UniRule"/>
</dbReference>
<dbReference type="GO" id="GO:0046872">
    <property type="term" value="F:metal ion binding"/>
    <property type="evidence" value="ECO:0007669"/>
    <property type="project" value="UniProtKB-KW"/>
</dbReference>
<dbReference type="GO" id="GO:0016679">
    <property type="term" value="F:oxidoreductase activity, acting on diphenols and related substances as donors"/>
    <property type="evidence" value="ECO:0007669"/>
    <property type="project" value="TreeGrafter"/>
</dbReference>
<dbReference type="GO" id="GO:0030091">
    <property type="term" value="P:protein repair"/>
    <property type="evidence" value="ECO:0007669"/>
    <property type="project" value="UniProtKB-UniRule"/>
</dbReference>
<dbReference type="HAMAP" id="MF_01207">
    <property type="entry name" value="MsrQ"/>
    <property type="match status" value="1"/>
</dbReference>
<dbReference type="InterPro" id="IPR013130">
    <property type="entry name" value="Fe3_Rdtase_TM_dom"/>
</dbReference>
<dbReference type="InterPro" id="IPR022837">
    <property type="entry name" value="MsrQ-like"/>
</dbReference>
<dbReference type="NCBIfam" id="NF003830">
    <property type="entry name" value="PRK05419.1-1"/>
    <property type="match status" value="1"/>
</dbReference>
<dbReference type="NCBIfam" id="NF003831">
    <property type="entry name" value="PRK05419.1-2"/>
    <property type="match status" value="1"/>
</dbReference>
<dbReference type="NCBIfam" id="NF003832">
    <property type="entry name" value="PRK05419.1-4"/>
    <property type="match status" value="1"/>
</dbReference>
<dbReference type="PANTHER" id="PTHR36964">
    <property type="entry name" value="PROTEIN-METHIONINE-SULFOXIDE REDUCTASE HEME-BINDING SUBUNIT MSRQ"/>
    <property type="match status" value="1"/>
</dbReference>
<dbReference type="PANTHER" id="PTHR36964:SF1">
    <property type="entry name" value="PROTEIN-METHIONINE-SULFOXIDE REDUCTASE HEME-BINDING SUBUNIT MSRQ"/>
    <property type="match status" value="1"/>
</dbReference>
<dbReference type="Pfam" id="PF01794">
    <property type="entry name" value="Ferric_reduct"/>
    <property type="match status" value="1"/>
</dbReference>
<name>MSRQ_SHIB3</name>
<keyword id="KW-0997">Cell inner membrane</keyword>
<keyword id="KW-1003">Cell membrane</keyword>
<keyword id="KW-0249">Electron transport</keyword>
<keyword id="KW-0285">Flavoprotein</keyword>
<keyword id="KW-0288">FMN</keyword>
<keyword id="KW-0349">Heme</keyword>
<keyword id="KW-0408">Iron</keyword>
<keyword id="KW-0472">Membrane</keyword>
<keyword id="KW-0479">Metal-binding</keyword>
<keyword id="KW-1185">Reference proteome</keyword>
<keyword id="KW-0812">Transmembrane</keyword>
<keyword id="KW-1133">Transmembrane helix</keyword>
<keyword id="KW-0813">Transport</keyword>
<accession>B2TWL3</accession>
<comment type="function">
    <text evidence="1">Part of the MsrPQ system that repairs oxidized periplasmic proteins containing methionine sulfoxide residues (Met-O), using respiratory chain electrons. Thus protects these proteins from oxidative-stress damage caused by reactive species of oxygen and chlorine generated by the host defense mechanisms. MsrPQ is essential for the maintenance of envelope integrity under bleach stress, rescuing a wide series of structurally unrelated periplasmic proteins from methionine oxidation, including the primary periplasmic chaperone SurA and the lipoprotein Pal. MsrQ provides electrons for reduction to the reductase catalytic subunit MsrP, using the quinone pool of the respiratory chain.</text>
</comment>
<comment type="cofactor">
    <cofactor evidence="1">
        <name>FMN</name>
        <dbReference type="ChEBI" id="CHEBI:58210"/>
    </cofactor>
    <text evidence="1">Binds 1 FMN per subunit.</text>
</comment>
<comment type="cofactor">
    <cofactor evidence="1">
        <name>heme b</name>
        <dbReference type="ChEBI" id="CHEBI:60344"/>
    </cofactor>
    <text evidence="1">Binds 1 heme b (iron(II)-protoporphyrin IX) group per subunit.</text>
</comment>
<comment type="subunit">
    <text evidence="1">Heterodimer of a catalytic subunit (MsrP) and a heme-binding subunit (MsrQ).</text>
</comment>
<comment type="subcellular location">
    <subcellularLocation>
        <location evidence="1">Cell inner membrane</location>
        <topology evidence="1">Multi-pass membrane protein</topology>
    </subcellularLocation>
</comment>
<comment type="similarity">
    <text evidence="1">Belongs to the MsrQ family.</text>
</comment>
<protein>
    <recommendedName>
        <fullName evidence="1">Protein-methionine-sulfoxide reductase heme-binding subunit MsrQ</fullName>
    </recommendedName>
    <alternativeName>
        <fullName evidence="1">Flavocytochrome MsrQ</fullName>
    </alternativeName>
</protein>
<organism>
    <name type="scientific">Shigella boydii serotype 18 (strain CDC 3083-94 / BS512)</name>
    <dbReference type="NCBI Taxonomy" id="344609"/>
    <lineage>
        <taxon>Bacteria</taxon>
        <taxon>Pseudomonadati</taxon>
        <taxon>Pseudomonadota</taxon>
        <taxon>Gammaproteobacteria</taxon>
        <taxon>Enterobacterales</taxon>
        <taxon>Enterobacteriaceae</taxon>
        <taxon>Shigella</taxon>
    </lineage>
</organism>
<gene>
    <name evidence="1" type="primary">msrQ</name>
    <name type="ordered locus">SbBS512_E0911</name>
</gene>
<feature type="chain" id="PRO_1000138748" description="Protein-methionine-sulfoxide reductase heme-binding subunit MsrQ">
    <location>
        <begin position="1"/>
        <end position="211"/>
    </location>
</feature>
<feature type="transmembrane region" description="Helical" evidence="1">
    <location>
        <begin position="17"/>
        <end position="37"/>
    </location>
</feature>
<feature type="transmembrane region" description="Helical" evidence="1">
    <location>
        <begin position="82"/>
        <end position="102"/>
    </location>
</feature>
<feature type="transmembrane region" description="Helical" evidence="1">
    <location>
        <begin position="116"/>
        <end position="136"/>
    </location>
</feature>
<feature type="transmembrane region" description="Helical" evidence="1">
    <location>
        <begin position="153"/>
        <end position="173"/>
    </location>
</feature>
<sequence>MRLTAKQVTWLKVSLHLAGLLPFLWLVWAINHGGLGADPVKDIQHFTGRTALKFLLATLLITPLARYAKQPLLIRTRRLLGLWCFAWATLHLTSYALLELGVNNLALLGKELITRPYLTLGIISWVILLALAFTSTQAMQRKLGKHWQQLHNFVYLVAILAPIHYLWSVKIISPQPLIYAGLAVLLLALRYKKLRSLFNRLRKQVHNKLSV</sequence>
<evidence type="ECO:0000255" key="1">
    <source>
        <dbReference type="HAMAP-Rule" id="MF_01207"/>
    </source>
</evidence>